<sequence length="90" mass="10614">MSRTVFCARLNKEADGLDFQLYPGELGKRIFDNISKEAWGQWQHKQTMLINEKKLNMMDPEHRKLLETEMVNFLFEGKEVHIEGYTPPSK</sequence>
<gene>
    <name type="ordered locus">VV1_1514</name>
</gene>
<feature type="chain" id="PRO_0000214511" description="Probable Fe(2+)-trafficking protein">
    <location>
        <begin position="1"/>
        <end position="90"/>
    </location>
</feature>
<evidence type="ECO:0000255" key="1">
    <source>
        <dbReference type="HAMAP-Rule" id="MF_00686"/>
    </source>
</evidence>
<name>FETP_VIBVU</name>
<reference key="1">
    <citation type="submission" date="2002-12" db="EMBL/GenBank/DDBJ databases">
        <title>Complete genome sequence of Vibrio vulnificus CMCP6.</title>
        <authorList>
            <person name="Rhee J.H."/>
            <person name="Kim S.Y."/>
            <person name="Chung S.S."/>
            <person name="Kim J.J."/>
            <person name="Moon Y.H."/>
            <person name="Jeong H."/>
            <person name="Choy H.E."/>
        </authorList>
    </citation>
    <scope>NUCLEOTIDE SEQUENCE [LARGE SCALE GENOMIC DNA]</scope>
    <source>
        <strain>CMCP6</strain>
    </source>
</reference>
<keyword id="KW-0408">Iron</keyword>
<organism>
    <name type="scientific">Vibrio vulnificus (strain CMCP6)</name>
    <dbReference type="NCBI Taxonomy" id="216895"/>
    <lineage>
        <taxon>Bacteria</taxon>
        <taxon>Pseudomonadati</taxon>
        <taxon>Pseudomonadota</taxon>
        <taxon>Gammaproteobacteria</taxon>
        <taxon>Vibrionales</taxon>
        <taxon>Vibrionaceae</taxon>
        <taxon>Vibrio</taxon>
    </lineage>
</organism>
<dbReference type="EMBL" id="AE016795">
    <property type="protein sequence ID" value="AAO09940.1"/>
    <property type="molecule type" value="Genomic_DNA"/>
</dbReference>
<dbReference type="RefSeq" id="WP_011079450.1">
    <property type="nucleotide sequence ID" value="NC_004459.3"/>
</dbReference>
<dbReference type="SMR" id="Q8DCC5"/>
<dbReference type="KEGG" id="vvu:VV1_1514"/>
<dbReference type="HOGENOM" id="CLU_170994_0_0_6"/>
<dbReference type="Proteomes" id="UP000002275">
    <property type="component" value="Chromosome 1"/>
</dbReference>
<dbReference type="GO" id="GO:0005829">
    <property type="term" value="C:cytosol"/>
    <property type="evidence" value="ECO:0007669"/>
    <property type="project" value="TreeGrafter"/>
</dbReference>
<dbReference type="GO" id="GO:0005506">
    <property type="term" value="F:iron ion binding"/>
    <property type="evidence" value="ECO:0007669"/>
    <property type="project" value="UniProtKB-UniRule"/>
</dbReference>
<dbReference type="GO" id="GO:0034599">
    <property type="term" value="P:cellular response to oxidative stress"/>
    <property type="evidence" value="ECO:0007669"/>
    <property type="project" value="TreeGrafter"/>
</dbReference>
<dbReference type="FunFam" id="1.10.3880.10:FF:000001">
    <property type="entry name" value="Probable Fe(2+)-trafficking protein"/>
    <property type="match status" value="1"/>
</dbReference>
<dbReference type="Gene3D" id="1.10.3880.10">
    <property type="entry name" value="Fe(II) trafficking protein YggX"/>
    <property type="match status" value="1"/>
</dbReference>
<dbReference type="HAMAP" id="MF_00686">
    <property type="entry name" value="Fe_traffic_YggX"/>
    <property type="match status" value="1"/>
</dbReference>
<dbReference type="InterPro" id="IPR007457">
    <property type="entry name" value="Fe_traffick_prot_YggX"/>
</dbReference>
<dbReference type="InterPro" id="IPR036766">
    <property type="entry name" value="Fe_traffick_prot_YggX_sf"/>
</dbReference>
<dbReference type="NCBIfam" id="NF003817">
    <property type="entry name" value="PRK05408.1"/>
    <property type="match status" value="1"/>
</dbReference>
<dbReference type="PANTHER" id="PTHR36965">
    <property type="entry name" value="FE(2+)-TRAFFICKING PROTEIN-RELATED"/>
    <property type="match status" value="1"/>
</dbReference>
<dbReference type="PANTHER" id="PTHR36965:SF1">
    <property type="entry name" value="FE(2+)-TRAFFICKING PROTEIN-RELATED"/>
    <property type="match status" value="1"/>
</dbReference>
<dbReference type="Pfam" id="PF04362">
    <property type="entry name" value="Iron_traffic"/>
    <property type="match status" value="1"/>
</dbReference>
<dbReference type="PIRSF" id="PIRSF029827">
    <property type="entry name" value="Fe_traffic_YggX"/>
    <property type="match status" value="1"/>
</dbReference>
<dbReference type="SUPFAM" id="SSF111148">
    <property type="entry name" value="YggX-like"/>
    <property type="match status" value="1"/>
</dbReference>
<accession>Q8DCC5</accession>
<proteinExistence type="inferred from homology"/>
<protein>
    <recommendedName>
        <fullName evidence="1">Probable Fe(2+)-trafficking protein</fullName>
    </recommendedName>
</protein>
<comment type="function">
    <text evidence="1">Could be a mediator in iron transactions between iron acquisition and iron-requiring processes, such as synthesis and/or repair of Fe-S clusters in biosynthetic enzymes.</text>
</comment>
<comment type="similarity">
    <text evidence="1">Belongs to the Fe(2+)-trafficking protein family.</text>
</comment>